<dbReference type="EC" id="3.6.5.-" evidence="1"/>
<dbReference type="EMBL" id="BX255923">
    <property type="status" value="NOT_ANNOTATED_CDS"/>
    <property type="molecule type" value="Genomic_DNA"/>
</dbReference>
<dbReference type="CCDS" id="CCDS43827.1"/>
<dbReference type="RefSeq" id="NP_001078926.1">
    <property type="nucleotide sequence ID" value="NM_001085457.2"/>
</dbReference>
<dbReference type="SMR" id="Q4V339"/>
<dbReference type="BioGRID" id="569243">
    <property type="interactions" value="15"/>
</dbReference>
<dbReference type="FunCoup" id="Q4V339">
    <property type="interactions" value="422"/>
</dbReference>
<dbReference type="IntAct" id="Q4V339">
    <property type="interactions" value="11"/>
</dbReference>
<dbReference type="STRING" id="9606.ENSP00000366608"/>
<dbReference type="GlyGen" id="Q4V339">
    <property type="glycosylation" value="1 site, 1 O-linked glycan (1 site)"/>
</dbReference>
<dbReference type="iPTMnet" id="Q4V339"/>
<dbReference type="PhosphoSitePlus" id="Q4V339"/>
<dbReference type="BioMuta" id="CBWD6"/>
<dbReference type="DMDM" id="74753577"/>
<dbReference type="jPOST" id="Q4V339"/>
<dbReference type="MassIVE" id="Q4V339"/>
<dbReference type="PaxDb" id="9606-ENSP00000366608"/>
<dbReference type="PeptideAtlas" id="Q4V339"/>
<dbReference type="ProteomicsDB" id="62277"/>
<dbReference type="Pumba" id="Q4V339"/>
<dbReference type="Antibodypedia" id="75705">
    <property type="antibodies" value="41 antibodies from 10 providers"/>
</dbReference>
<dbReference type="DNASU" id="644019"/>
<dbReference type="Ensembl" id="ENST00000377391.8">
    <property type="protein sequence ID" value="ENSP00000366608.4"/>
    <property type="gene ID" value="ENSG00000215126.12"/>
</dbReference>
<dbReference type="GeneID" id="644019"/>
<dbReference type="KEGG" id="hsa:644019"/>
<dbReference type="MANE-Select" id="ENST00000377391.8">
    <property type="protein sequence ID" value="ENSP00000366608.4"/>
    <property type="RefSeq nucleotide sequence ID" value="NM_001085457.2"/>
    <property type="RefSeq protein sequence ID" value="NP_001078926.1"/>
</dbReference>
<dbReference type="UCSC" id="uc033csb.2">
    <property type="organism name" value="human"/>
</dbReference>
<dbReference type="AGR" id="HGNC:31978"/>
<dbReference type="CTD" id="644019"/>
<dbReference type="GeneCards" id="ZNG1F"/>
<dbReference type="HGNC" id="HGNC:31978">
    <property type="gene designation" value="ZNG1F"/>
</dbReference>
<dbReference type="HPA" id="ENSG00000215126">
    <property type="expression patterns" value="Low tissue specificity"/>
</dbReference>
<dbReference type="neXtProt" id="NX_Q4V339"/>
<dbReference type="PharmGKB" id="PA145149332"/>
<dbReference type="VEuPathDB" id="HostDB:ENSG00000215126"/>
<dbReference type="eggNOG" id="KOG2743">
    <property type="taxonomic scope" value="Eukaryota"/>
</dbReference>
<dbReference type="GeneTree" id="ENSGT00640000091523"/>
<dbReference type="InParanoid" id="Q4V339"/>
<dbReference type="OMA" id="QNEMGYE"/>
<dbReference type="OrthoDB" id="258627at2759"/>
<dbReference type="PAN-GO" id="Q4V339">
    <property type="GO annotations" value="1 GO annotation based on evolutionary models"/>
</dbReference>
<dbReference type="PhylomeDB" id="Q4V339"/>
<dbReference type="TreeFam" id="TF332679"/>
<dbReference type="PathwayCommons" id="Q4V339"/>
<dbReference type="SignaLink" id="Q4V339"/>
<dbReference type="BioGRID-ORCS" id="644019">
    <property type="hits" value="39 hits in 625 CRISPR screens"/>
</dbReference>
<dbReference type="ChiTaRS" id="CBWD6">
    <property type="organism name" value="human"/>
</dbReference>
<dbReference type="GenomeRNAi" id="644019"/>
<dbReference type="Pharos" id="Q4V339">
    <property type="development level" value="Tdark"/>
</dbReference>
<dbReference type="PRO" id="PR:Q4V339"/>
<dbReference type="Proteomes" id="UP000005640">
    <property type="component" value="Chromosome 9"/>
</dbReference>
<dbReference type="RNAct" id="Q4V339">
    <property type="molecule type" value="protein"/>
</dbReference>
<dbReference type="Bgee" id="ENSG00000215126">
    <property type="expression patterns" value="Expressed in cerebellar cortex and 97 other cell types or tissues"/>
</dbReference>
<dbReference type="ExpressionAtlas" id="Q4V339">
    <property type="expression patterns" value="baseline and differential"/>
</dbReference>
<dbReference type="GO" id="GO:0005737">
    <property type="term" value="C:cytoplasm"/>
    <property type="evidence" value="ECO:0000318"/>
    <property type="project" value="GO_Central"/>
</dbReference>
<dbReference type="GO" id="GO:0005634">
    <property type="term" value="C:nucleus"/>
    <property type="evidence" value="ECO:0000250"/>
    <property type="project" value="UniProtKB"/>
</dbReference>
<dbReference type="GO" id="GO:0005525">
    <property type="term" value="F:GTP binding"/>
    <property type="evidence" value="ECO:0007669"/>
    <property type="project" value="UniProtKB-KW"/>
</dbReference>
<dbReference type="GO" id="GO:0016787">
    <property type="term" value="F:hydrolase activity"/>
    <property type="evidence" value="ECO:0007669"/>
    <property type="project" value="UniProtKB-KW"/>
</dbReference>
<dbReference type="GO" id="GO:0046872">
    <property type="term" value="F:metal ion binding"/>
    <property type="evidence" value="ECO:0007669"/>
    <property type="project" value="UniProtKB-KW"/>
</dbReference>
<dbReference type="CDD" id="cd03112">
    <property type="entry name" value="CobW-like"/>
    <property type="match status" value="1"/>
</dbReference>
<dbReference type="Gene3D" id="3.30.1220.10">
    <property type="entry name" value="CobW-like, C-terminal domain"/>
    <property type="match status" value="1"/>
</dbReference>
<dbReference type="Gene3D" id="3.40.50.300">
    <property type="entry name" value="P-loop containing nucleotide triphosphate hydrolases"/>
    <property type="match status" value="1"/>
</dbReference>
<dbReference type="InterPro" id="IPR036627">
    <property type="entry name" value="CobW-likC_sf"/>
</dbReference>
<dbReference type="InterPro" id="IPR011629">
    <property type="entry name" value="CobW-like_C"/>
</dbReference>
<dbReference type="InterPro" id="IPR003495">
    <property type="entry name" value="CobW/HypB/UreG_nucleotide-bd"/>
</dbReference>
<dbReference type="InterPro" id="IPR027417">
    <property type="entry name" value="P-loop_NTPase"/>
</dbReference>
<dbReference type="InterPro" id="IPR051316">
    <property type="entry name" value="Zinc-reg_GTPase_activator"/>
</dbReference>
<dbReference type="PANTHER" id="PTHR13748">
    <property type="entry name" value="COBW-RELATED"/>
    <property type="match status" value="1"/>
</dbReference>
<dbReference type="PANTHER" id="PTHR13748:SF31">
    <property type="entry name" value="ZINC-REGULATED GTPASE METALLOPROTEIN ACTIVATOR 1A-RELATED"/>
    <property type="match status" value="1"/>
</dbReference>
<dbReference type="Pfam" id="PF02492">
    <property type="entry name" value="cobW"/>
    <property type="match status" value="1"/>
</dbReference>
<dbReference type="Pfam" id="PF07683">
    <property type="entry name" value="CobW_C"/>
    <property type="match status" value="1"/>
</dbReference>
<dbReference type="SMART" id="SM00833">
    <property type="entry name" value="CobW_C"/>
    <property type="match status" value="1"/>
</dbReference>
<dbReference type="SUPFAM" id="SSF90002">
    <property type="entry name" value="Hypothetical protein YjiA, C-terminal domain"/>
    <property type="match status" value="1"/>
</dbReference>
<dbReference type="SUPFAM" id="SSF52540">
    <property type="entry name" value="P-loop containing nucleoside triphosphate hydrolases"/>
    <property type="match status" value="1"/>
</dbReference>
<keyword id="KW-0143">Chaperone</keyword>
<keyword id="KW-0342">GTP-binding</keyword>
<keyword id="KW-0378">Hydrolase</keyword>
<keyword id="KW-0479">Metal-binding</keyword>
<keyword id="KW-0547">Nucleotide-binding</keyword>
<keyword id="KW-0539">Nucleus</keyword>
<keyword id="KW-1185">Reference proteome</keyword>
<keyword id="KW-0862">Zinc</keyword>
<sequence length="395" mass="43964">MLPAVGSVDEEEDPAEEDCPELVPIETTQSEEEEKSGLGAKIPVTIITGYLGAGKTTLLNYILTEQHSKRVAVILNESGEGSALEKSLAVSQGGELYEEWLELRNGCLCCSVKDNGLRAIENLMQKKGKFDDILLETTGLADPGAVASMFWVDAELGSDIYLDGIITIVDSKYGLKHLTEEKPDGLINEATRQVALADIILINKTDLVPEEDVKKLRTTLRSINGLGQILETQRSRVDLSNVLDLHAFDSLSGISLQKKLQHVPGTQPHLDQSIVTITFDVPGNAKEEHLNMFIQNLLWEKNVRNKDNHCMEVIRLKGLVSIKDKSQQVIVQGVHELCDLEETPVSWKDDTERTNRLVLIGRNLDKDILKQLFIATVTETEKQWTTHFKEDQVCT</sequence>
<comment type="function">
    <text evidence="1 4">Zinc chaperone that directly transfers zinc cofactor to target metalloproteins, thereby activating them (By similarity). Catalyzes zinc insertion into the active site of methionine aminopeptidase METAP1, which function to cleave the initiator methionine from polypeptides during or after protein translation (PubMed:35584702). Mechanistically, the N-terminal psi-PxLVp motif binds to the C6H2-type zinc finger of inactive form of METAP1 (By similarity). After formation of the docked complex, zinc is transferred from the CXCC motif in the GTPase domain of ZNG1F to the zinc binding site in the peptidase domain of METAP1 in a process requiring GTP hydrolysis (By similarity). GTP/GDP exchange is required for release of active METAP1 (By similarity).</text>
</comment>
<comment type="catalytic activity">
    <reaction evidence="1">
        <text>GTP + H2O = GDP + phosphate + H(+)</text>
        <dbReference type="Rhea" id="RHEA:19669"/>
        <dbReference type="ChEBI" id="CHEBI:15377"/>
        <dbReference type="ChEBI" id="CHEBI:15378"/>
        <dbReference type="ChEBI" id="CHEBI:37565"/>
        <dbReference type="ChEBI" id="CHEBI:43474"/>
        <dbReference type="ChEBI" id="CHEBI:58189"/>
    </reaction>
    <physiologicalReaction direction="left-to-right" evidence="1">
        <dbReference type="Rhea" id="RHEA:19670"/>
    </physiologicalReaction>
</comment>
<comment type="subcellular location">
    <subcellularLocation>
        <location evidence="1">Nucleus</location>
    </subcellularLocation>
</comment>
<comment type="similarity">
    <text evidence="6">Belongs to the SIMIBI class G3E GTPase family. ZNG1 subfamily.</text>
</comment>
<feature type="chain" id="PRO_0000316774" description="Zinc-regulated GTPase metalloprotein activator 1F">
    <location>
        <begin position="1"/>
        <end position="395"/>
    </location>
</feature>
<feature type="domain" description="CobW C-terminal">
    <location>
        <begin position="274"/>
        <end position="377"/>
    </location>
</feature>
<feature type="region of interest" description="Disordered" evidence="3">
    <location>
        <begin position="1"/>
        <end position="22"/>
    </location>
</feature>
<feature type="short sequence motif" description="psi-PxLVp motif" evidence="1">
    <location>
        <begin position="17"/>
        <end position="24"/>
    </location>
</feature>
<feature type="short sequence motif" description="CXCC motif" evidence="2">
    <location>
        <begin position="107"/>
        <end position="110"/>
    </location>
</feature>
<feature type="compositionally biased region" description="Acidic residues" evidence="3">
    <location>
        <begin position="8"/>
        <end position="20"/>
    </location>
</feature>
<feature type="binding site" evidence="2">
    <location>
        <begin position="49"/>
        <end position="56"/>
    </location>
    <ligand>
        <name>GTP</name>
        <dbReference type="ChEBI" id="CHEBI:37565"/>
    </ligand>
</feature>
<feature type="binding site" evidence="1">
    <location>
        <position position="107"/>
    </location>
    <ligand>
        <name>Zn(2+)</name>
        <dbReference type="ChEBI" id="CHEBI:29105"/>
    </ligand>
</feature>
<feature type="binding site" evidence="1">
    <location>
        <position position="109"/>
    </location>
    <ligand>
        <name>Zn(2+)</name>
        <dbReference type="ChEBI" id="CHEBI:29105"/>
    </ligand>
</feature>
<feature type="binding site" evidence="2">
    <location>
        <begin position="110"/>
        <end position="114"/>
    </location>
    <ligand>
        <name>GTP</name>
        <dbReference type="ChEBI" id="CHEBI:37565"/>
    </ligand>
</feature>
<feature type="binding site" evidence="1">
    <location>
        <position position="110"/>
    </location>
    <ligand>
        <name>Zn(2+)</name>
        <dbReference type="ChEBI" id="CHEBI:29105"/>
    </ligand>
</feature>
<feature type="binding site" evidence="2">
    <location>
        <begin position="203"/>
        <end position="206"/>
    </location>
    <ligand>
        <name>GTP</name>
        <dbReference type="ChEBI" id="CHEBI:37565"/>
    </ligand>
</feature>
<proteinExistence type="inferred from homology"/>
<accession>Q4V339</accession>
<gene>
    <name evidence="7" type="primary">ZNG1F</name>
    <name evidence="7" type="synonym">CBWD6</name>
    <name evidence="7" type="synonym">CBWD7</name>
</gene>
<protein>
    <recommendedName>
        <fullName evidence="5">Zinc-regulated GTPase metalloprotein activator 1F</fullName>
        <ecNumber evidence="1">3.6.5.-</ecNumber>
    </recommendedName>
    <alternativeName>
        <fullName evidence="6">Cobalamin synthase W domain-containing protein 6</fullName>
        <shortName evidence="6">COBW domain-containing protein 6</shortName>
    </alternativeName>
</protein>
<reference key="1">
    <citation type="journal article" date="2004" name="Nature">
        <title>DNA sequence and analysis of human chromosome 9.</title>
        <authorList>
            <person name="Humphray S.J."/>
            <person name="Oliver K."/>
            <person name="Hunt A.R."/>
            <person name="Plumb R.W."/>
            <person name="Loveland J.E."/>
            <person name="Howe K.L."/>
            <person name="Andrews T.D."/>
            <person name="Searle S."/>
            <person name="Hunt S.E."/>
            <person name="Scott C.E."/>
            <person name="Jones M.C."/>
            <person name="Ainscough R."/>
            <person name="Almeida J.P."/>
            <person name="Ambrose K.D."/>
            <person name="Ashwell R.I.S."/>
            <person name="Babbage A.K."/>
            <person name="Babbage S."/>
            <person name="Bagguley C.L."/>
            <person name="Bailey J."/>
            <person name="Banerjee R."/>
            <person name="Barker D.J."/>
            <person name="Barlow K.F."/>
            <person name="Bates K."/>
            <person name="Beasley H."/>
            <person name="Beasley O."/>
            <person name="Bird C.P."/>
            <person name="Bray-Allen S."/>
            <person name="Brown A.J."/>
            <person name="Brown J.Y."/>
            <person name="Burford D."/>
            <person name="Burrill W."/>
            <person name="Burton J."/>
            <person name="Carder C."/>
            <person name="Carter N.P."/>
            <person name="Chapman J.C."/>
            <person name="Chen Y."/>
            <person name="Clarke G."/>
            <person name="Clark S.Y."/>
            <person name="Clee C.M."/>
            <person name="Clegg S."/>
            <person name="Collier R.E."/>
            <person name="Corby N."/>
            <person name="Crosier M."/>
            <person name="Cummings A.T."/>
            <person name="Davies J."/>
            <person name="Dhami P."/>
            <person name="Dunn M."/>
            <person name="Dutta I."/>
            <person name="Dyer L.W."/>
            <person name="Earthrowl M.E."/>
            <person name="Faulkner L."/>
            <person name="Fleming C.J."/>
            <person name="Frankish A."/>
            <person name="Frankland J.A."/>
            <person name="French L."/>
            <person name="Fricker D.G."/>
            <person name="Garner P."/>
            <person name="Garnett J."/>
            <person name="Ghori J."/>
            <person name="Gilbert J.G.R."/>
            <person name="Glison C."/>
            <person name="Grafham D.V."/>
            <person name="Gribble S."/>
            <person name="Griffiths C."/>
            <person name="Griffiths-Jones S."/>
            <person name="Grocock R."/>
            <person name="Guy J."/>
            <person name="Hall R.E."/>
            <person name="Hammond S."/>
            <person name="Harley J.L."/>
            <person name="Harrison E.S.I."/>
            <person name="Hart E.A."/>
            <person name="Heath P.D."/>
            <person name="Henderson C.D."/>
            <person name="Hopkins B.L."/>
            <person name="Howard P.J."/>
            <person name="Howden P.J."/>
            <person name="Huckle E."/>
            <person name="Johnson C."/>
            <person name="Johnson D."/>
            <person name="Joy A.A."/>
            <person name="Kay M."/>
            <person name="Keenan S."/>
            <person name="Kershaw J.K."/>
            <person name="Kimberley A.M."/>
            <person name="King A."/>
            <person name="Knights A."/>
            <person name="Laird G.K."/>
            <person name="Langford C."/>
            <person name="Lawlor S."/>
            <person name="Leongamornlert D.A."/>
            <person name="Leversha M."/>
            <person name="Lloyd C."/>
            <person name="Lloyd D.M."/>
            <person name="Lovell J."/>
            <person name="Martin S."/>
            <person name="Mashreghi-Mohammadi M."/>
            <person name="Matthews L."/>
            <person name="McLaren S."/>
            <person name="McLay K.E."/>
            <person name="McMurray A."/>
            <person name="Milne S."/>
            <person name="Nickerson T."/>
            <person name="Nisbett J."/>
            <person name="Nordsiek G."/>
            <person name="Pearce A.V."/>
            <person name="Peck A.I."/>
            <person name="Porter K.M."/>
            <person name="Pandian R."/>
            <person name="Pelan S."/>
            <person name="Phillimore B."/>
            <person name="Povey S."/>
            <person name="Ramsey Y."/>
            <person name="Rand V."/>
            <person name="Scharfe M."/>
            <person name="Sehra H.K."/>
            <person name="Shownkeen R."/>
            <person name="Sims S.K."/>
            <person name="Skuce C.D."/>
            <person name="Smith M."/>
            <person name="Steward C.A."/>
            <person name="Swarbreck D."/>
            <person name="Sycamore N."/>
            <person name="Tester J."/>
            <person name="Thorpe A."/>
            <person name="Tracey A."/>
            <person name="Tromans A."/>
            <person name="Thomas D.W."/>
            <person name="Wall M."/>
            <person name="Wallis J.M."/>
            <person name="West A.P."/>
            <person name="Whitehead S.L."/>
            <person name="Willey D.L."/>
            <person name="Williams S.A."/>
            <person name="Wilming L."/>
            <person name="Wray P.W."/>
            <person name="Young L."/>
            <person name="Ashurst J.L."/>
            <person name="Coulson A."/>
            <person name="Blocker H."/>
            <person name="Durbin R.M."/>
            <person name="Sulston J.E."/>
            <person name="Hubbard T."/>
            <person name="Jackson M.J."/>
            <person name="Bentley D.R."/>
            <person name="Beck S."/>
            <person name="Rogers J."/>
            <person name="Dunham I."/>
        </authorList>
    </citation>
    <scope>NUCLEOTIDE SEQUENCE [LARGE SCALE GENOMIC DNA]</scope>
</reference>
<reference key="2">
    <citation type="journal article" date="2022" name="Cell">
        <title>Zn-regulated GTPase metalloprotein activator 1 modulates vertebrate zinc homeostasis.</title>
        <authorList>
            <person name="Weiss A."/>
            <person name="Murdoch C.C."/>
            <person name="Edmonds K.A."/>
            <person name="Jordan M.R."/>
            <person name="Monteith A.J."/>
            <person name="Perera Y.R."/>
            <person name="Rodriguez Nassif A.M."/>
            <person name="Petoletti A.M."/>
            <person name="Beavers W.N."/>
            <person name="Munneke M.J."/>
            <person name="Drury S.L."/>
            <person name="Krystofiak E.S."/>
            <person name="Thalluri K."/>
            <person name="Wu H."/>
            <person name="Kruse A.R.S."/>
            <person name="DiMarchi R.D."/>
            <person name="Caprioli R.M."/>
            <person name="Spraggins J.M."/>
            <person name="Chazin W.J."/>
            <person name="Giedroc D.P."/>
            <person name="Skaar E.P."/>
        </authorList>
    </citation>
    <scope>FUNCTION</scope>
    <scope>NOMENCLATURE</scope>
</reference>
<organism>
    <name type="scientific">Homo sapiens</name>
    <name type="common">Human</name>
    <dbReference type="NCBI Taxonomy" id="9606"/>
    <lineage>
        <taxon>Eukaryota</taxon>
        <taxon>Metazoa</taxon>
        <taxon>Chordata</taxon>
        <taxon>Craniata</taxon>
        <taxon>Vertebrata</taxon>
        <taxon>Euteleostomi</taxon>
        <taxon>Mammalia</taxon>
        <taxon>Eutheria</taxon>
        <taxon>Euarchontoglires</taxon>
        <taxon>Primates</taxon>
        <taxon>Haplorrhini</taxon>
        <taxon>Catarrhini</taxon>
        <taxon>Hominidae</taxon>
        <taxon>Homo</taxon>
    </lineage>
</organism>
<name>ZNG1F_HUMAN</name>
<evidence type="ECO:0000250" key="1">
    <source>
        <dbReference type="UniProtKB" id="Q8VEH6"/>
    </source>
</evidence>
<evidence type="ECO:0000255" key="2"/>
<evidence type="ECO:0000256" key="3">
    <source>
        <dbReference type="SAM" id="MobiDB-lite"/>
    </source>
</evidence>
<evidence type="ECO:0000269" key="4">
    <source>
    </source>
</evidence>
<evidence type="ECO:0000303" key="5">
    <source>
    </source>
</evidence>
<evidence type="ECO:0000305" key="6"/>
<evidence type="ECO:0000312" key="7">
    <source>
        <dbReference type="HGNC" id="HGNC:31978"/>
    </source>
</evidence>